<comment type="function">
    <text evidence="1">Catalyzes the condensation of pantoate with beta-alanine in an ATP-dependent reaction via a pantoyl-adenylate intermediate.</text>
</comment>
<comment type="catalytic activity">
    <reaction evidence="1">
        <text>(R)-pantoate + beta-alanine + ATP = (R)-pantothenate + AMP + diphosphate + H(+)</text>
        <dbReference type="Rhea" id="RHEA:10912"/>
        <dbReference type="ChEBI" id="CHEBI:15378"/>
        <dbReference type="ChEBI" id="CHEBI:15980"/>
        <dbReference type="ChEBI" id="CHEBI:29032"/>
        <dbReference type="ChEBI" id="CHEBI:30616"/>
        <dbReference type="ChEBI" id="CHEBI:33019"/>
        <dbReference type="ChEBI" id="CHEBI:57966"/>
        <dbReference type="ChEBI" id="CHEBI:456215"/>
        <dbReference type="EC" id="6.3.2.1"/>
    </reaction>
</comment>
<comment type="pathway">
    <text evidence="1">Cofactor biosynthesis; (R)-pantothenate biosynthesis; (R)-pantothenate from (R)-pantoate and beta-alanine: step 1/1.</text>
</comment>
<comment type="subunit">
    <text evidence="1">Homodimer.</text>
</comment>
<comment type="subcellular location">
    <subcellularLocation>
        <location evidence="1">Cytoplasm</location>
    </subcellularLocation>
</comment>
<comment type="miscellaneous">
    <text evidence="1">The reaction proceeds by a bi uni uni bi ping pong mechanism.</text>
</comment>
<comment type="similarity">
    <text evidence="1">Belongs to the pantothenate synthetase family.</text>
</comment>
<feature type="chain" id="PRO_0000305568" description="Pantothenate synthetase">
    <location>
        <begin position="1"/>
        <end position="283"/>
    </location>
</feature>
<feature type="active site" description="Proton donor" evidence="1">
    <location>
        <position position="33"/>
    </location>
</feature>
<feature type="binding site" evidence="1">
    <location>
        <begin position="26"/>
        <end position="33"/>
    </location>
    <ligand>
        <name>ATP</name>
        <dbReference type="ChEBI" id="CHEBI:30616"/>
    </ligand>
</feature>
<feature type="binding site" evidence="1">
    <location>
        <position position="57"/>
    </location>
    <ligand>
        <name>(R)-pantoate</name>
        <dbReference type="ChEBI" id="CHEBI:15980"/>
    </ligand>
</feature>
<feature type="binding site" evidence="1">
    <location>
        <position position="57"/>
    </location>
    <ligand>
        <name>beta-alanine</name>
        <dbReference type="ChEBI" id="CHEBI:57966"/>
    </ligand>
</feature>
<feature type="binding site" evidence="1">
    <location>
        <begin position="144"/>
        <end position="147"/>
    </location>
    <ligand>
        <name>ATP</name>
        <dbReference type="ChEBI" id="CHEBI:30616"/>
    </ligand>
</feature>
<feature type="binding site" evidence="1">
    <location>
        <position position="150"/>
    </location>
    <ligand>
        <name>(R)-pantoate</name>
        <dbReference type="ChEBI" id="CHEBI:15980"/>
    </ligand>
</feature>
<feature type="binding site" evidence="1">
    <location>
        <position position="173"/>
    </location>
    <ligand>
        <name>ATP</name>
        <dbReference type="ChEBI" id="CHEBI:30616"/>
    </ligand>
</feature>
<feature type="binding site" evidence="1">
    <location>
        <begin position="181"/>
        <end position="184"/>
    </location>
    <ligand>
        <name>ATP</name>
        <dbReference type="ChEBI" id="CHEBI:30616"/>
    </ligand>
</feature>
<proteinExistence type="inferred from homology"/>
<organism>
    <name type="scientific">Thiobacillus denitrificans (strain ATCC 25259 / T1)</name>
    <dbReference type="NCBI Taxonomy" id="292415"/>
    <lineage>
        <taxon>Bacteria</taxon>
        <taxon>Pseudomonadati</taxon>
        <taxon>Pseudomonadota</taxon>
        <taxon>Betaproteobacteria</taxon>
        <taxon>Nitrosomonadales</taxon>
        <taxon>Thiobacillaceae</taxon>
        <taxon>Thiobacillus</taxon>
    </lineage>
</organism>
<protein>
    <recommendedName>
        <fullName evidence="1">Pantothenate synthetase</fullName>
        <shortName evidence="1">PS</shortName>
        <ecNumber evidence="1">6.3.2.1</ecNumber>
    </recommendedName>
    <alternativeName>
        <fullName evidence="1">Pantoate--beta-alanine ligase</fullName>
    </alternativeName>
    <alternativeName>
        <fullName evidence="1">Pantoate-activating enzyme</fullName>
    </alternativeName>
</protein>
<accession>Q3SH82</accession>
<reference key="1">
    <citation type="journal article" date="2006" name="J. Bacteriol.">
        <title>The genome sequence of the obligately chemolithoautotrophic, facultatively anaerobic bacterium Thiobacillus denitrificans.</title>
        <authorList>
            <person name="Beller H.R."/>
            <person name="Chain P.S."/>
            <person name="Letain T.E."/>
            <person name="Chakicherla A."/>
            <person name="Larimer F.W."/>
            <person name="Richardson P.M."/>
            <person name="Coleman M.A."/>
            <person name="Wood A.P."/>
            <person name="Kelly D.P."/>
        </authorList>
    </citation>
    <scope>NUCLEOTIDE SEQUENCE [LARGE SCALE GENOMIC DNA]</scope>
    <source>
        <strain>ATCC 25259 / T1</strain>
    </source>
</reference>
<keyword id="KW-0067">ATP-binding</keyword>
<keyword id="KW-0963">Cytoplasm</keyword>
<keyword id="KW-0436">Ligase</keyword>
<keyword id="KW-0547">Nucleotide-binding</keyword>
<keyword id="KW-0566">Pantothenate biosynthesis</keyword>
<keyword id="KW-1185">Reference proteome</keyword>
<gene>
    <name evidence="1" type="primary">panC</name>
    <name type="ordered locus">Tbd_2054</name>
</gene>
<sequence length="283" mass="30117">MQVVHTVADLRAALSEADRSAFVPTMGNLHAGHVSLVELAKRHGGPVVASIFVNPLQFGAGEDFERYPRTLAADCDKLAEAGCDLVFAPDTSALYPVAQTFRVDVPAALAEDLCGAFRPGHFAGVATVVLKLFNLVRPQVAVFGRKDYQQLLVVREMVRQFNLPIDIVAGATLRDPDGLAMSSRNGYLSAAERAQAPQLQRELAAIVAAIDGGARNFAALAAAARQRLTGAGWRVDYVEIRDAESLKTATQETEALVVLAAAWLGQTRLIDNLEVTSAAGIAA</sequence>
<dbReference type="EC" id="6.3.2.1" evidence="1"/>
<dbReference type="EMBL" id="CP000116">
    <property type="protein sequence ID" value="AAZ98007.1"/>
    <property type="molecule type" value="Genomic_DNA"/>
</dbReference>
<dbReference type="RefSeq" id="WP_011312566.1">
    <property type="nucleotide sequence ID" value="NC_007404.1"/>
</dbReference>
<dbReference type="SMR" id="Q3SH82"/>
<dbReference type="STRING" id="292415.Tbd_2054"/>
<dbReference type="KEGG" id="tbd:Tbd_2054"/>
<dbReference type="eggNOG" id="COG0414">
    <property type="taxonomic scope" value="Bacteria"/>
</dbReference>
<dbReference type="HOGENOM" id="CLU_047148_0_0_4"/>
<dbReference type="OrthoDB" id="9773087at2"/>
<dbReference type="UniPathway" id="UPA00028">
    <property type="reaction ID" value="UER00005"/>
</dbReference>
<dbReference type="Proteomes" id="UP000008291">
    <property type="component" value="Chromosome"/>
</dbReference>
<dbReference type="GO" id="GO:0005829">
    <property type="term" value="C:cytosol"/>
    <property type="evidence" value="ECO:0007669"/>
    <property type="project" value="TreeGrafter"/>
</dbReference>
<dbReference type="GO" id="GO:0005524">
    <property type="term" value="F:ATP binding"/>
    <property type="evidence" value="ECO:0007669"/>
    <property type="project" value="UniProtKB-KW"/>
</dbReference>
<dbReference type="GO" id="GO:0004592">
    <property type="term" value="F:pantoate-beta-alanine ligase activity"/>
    <property type="evidence" value="ECO:0007669"/>
    <property type="project" value="UniProtKB-UniRule"/>
</dbReference>
<dbReference type="GO" id="GO:0015940">
    <property type="term" value="P:pantothenate biosynthetic process"/>
    <property type="evidence" value="ECO:0007669"/>
    <property type="project" value="UniProtKB-UniRule"/>
</dbReference>
<dbReference type="CDD" id="cd00560">
    <property type="entry name" value="PanC"/>
    <property type="match status" value="1"/>
</dbReference>
<dbReference type="FunFam" id="3.30.1300.10:FF:000001">
    <property type="entry name" value="Pantothenate synthetase"/>
    <property type="match status" value="1"/>
</dbReference>
<dbReference type="Gene3D" id="3.40.50.620">
    <property type="entry name" value="HUPs"/>
    <property type="match status" value="1"/>
</dbReference>
<dbReference type="Gene3D" id="3.30.1300.10">
    <property type="entry name" value="Pantoate-beta-alanine ligase, C-terminal domain"/>
    <property type="match status" value="1"/>
</dbReference>
<dbReference type="HAMAP" id="MF_00158">
    <property type="entry name" value="PanC"/>
    <property type="match status" value="1"/>
</dbReference>
<dbReference type="InterPro" id="IPR003721">
    <property type="entry name" value="Pantoate_ligase"/>
</dbReference>
<dbReference type="InterPro" id="IPR042176">
    <property type="entry name" value="Pantoate_ligase_C"/>
</dbReference>
<dbReference type="InterPro" id="IPR014729">
    <property type="entry name" value="Rossmann-like_a/b/a_fold"/>
</dbReference>
<dbReference type="NCBIfam" id="TIGR00018">
    <property type="entry name" value="panC"/>
    <property type="match status" value="1"/>
</dbReference>
<dbReference type="PANTHER" id="PTHR21299">
    <property type="entry name" value="CYTIDYLATE KINASE/PANTOATE-BETA-ALANINE LIGASE"/>
    <property type="match status" value="1"/>
</dbReference>
<dbReference type="PANTHER" id="PTHR21299:SF1">
    <property type="entry name" value="PANTOATE--BETA-ALANINE LIGASE"/>
    <property type="match status" value="1"/>
</dbReference>
<dbReference type="Pfam" id="PF02569">
    <property type="entry name" value="Pantoate_ligase"/>
    <property type="match status" value="1"/>
</dbReference>
<dbReference type="SUPFAM" id="SSF52374">
    <property type="entry name" value="Nucleotidylyl transferase"/>
    <property type="match status" value="1"/>
</dbReference>
<evidence type="ECO:0000255" key="1">
    <source>
        <dbReference type="HAMAP-Rule" id="MF_00158"/>
    </source>
</evidence>
<name>PANC_THIDA</name>